<organismHost>
    <name type="scientific">Orgyia pseudotsugata</name>
    <name type="common">Douglas-fir tussock moth</name>
    <dbReference type="NCBI Taxonomy" id="33414"/>
</organismHost>
<protein>
    <recommendedName>
        <fullName>Uncharacterized 19.5 kDa protein</fullName>
    </recommendedName>
</protein>
<gene>
    <name type="ORF">ORF77</name>
</gene>
<feature type="chain" id="PRO_0000133015" description="Uncharacterized 19.5 kDa protein">
    <location>
        <begin position="1"/>
        <end position="172"/>
    </location>
</feature>
<keyword id="KW-1185">Reference proteome</keyword>
<name>Y074_NPVOP</name>
<accession>O10327</accession>
<dbReference type="EMBL" id="U75930">
    <property type="protein sequence ID" value="AAC59076.1"/>
    <property type="molecule type" value="Genomic_DNA"/>
</dbReference>
<dbReference type="RefSeq" id="NP_046233.1">
    <property type="nucleotide sequence ID" value="NC_001875.2"/>
</dbReference>
<dbReference type="KEGG" id="vg:912036"/>
<dbReference type="OrthoDB" id="10690at10239"/>
<dbReference type="Proteomes" id="UP000009248">
    <property type="component" value="Genome"/>
</dbReference>
<dbReference type="InterPro" id="IPR022594">
    <property type="entry name" value="AcMNPV_30.6kDa"/>
</dbReference>
<dbReference type="Pfam" id="PF10866">
    <property type="entry name" value="DUF2704"/>
    <property type="match status" value="1"/>
</dbReference>
<proteinExistence type="predicted"/>
<reference key="1">
    <citation type="journal article" date="1997" name="Virology">
        <title>The sequence of the Orgyia pseudotsugata multinucleocapsid nuclear polyhedrosis virus genome.</title>
        <authorList>
            <person name="Ahrens C.H."/>
            <person name="Russell R.R."/>
            <person name="Funk C.J."/>
            <person name="Evans J."/>
            <person name="Harwood S."/>
            <person name="Rohrmann G.F."/>
        </authorList>
    </citation>
    <scope>NUCLEOTIDE SEQUENCE [LARGE SCALE GENOMIC DNA]</scope>
</reference>
<organism>
    <name type="scientific">Orgyia pseudotsugata multicapsid polyhedrosis virus</name>
    <name type="common">OpMNPV</name>
    <dbReference type="NCBI Taxonomy" id="262177"/>
    <lineage>
        <taxon>Viruses</taxon>
        <taxon>Viruses incertae sedis</taxon>
        <taxon>Naldaviricetes</taxon>
        <taxon>Lefavirales</taxon>
        <taxon>Baculoviridae</taxon>
        <taxon>Alphabaculovirus</taxon>
        <taxon>Alphabaculovirus orpseudotsugatae</taxon>
    </lineage>
</organism>
<sequence>MSDAGEAPAVAATDKPHRRTLRAAQDDYTVDGLRLKPAYVEYYRQLQEIVELAVITLSKQLDIREVQEVYSLARQLYEILRGQFVDEPFKLWLETNASRLAADAEFKKSMHKILQDQLQTLTAKTNTFKNAVLNVLNNELSTDANLYDTSAGYIKPNCIVTTFTCCDLTFEP</sequence>